<comment type="function">
    <text evidence="2">Probably involved in reactive chlorine species (RCS) stress resistance.</text>
</comment>
<comment type="subcellular location">
    <subcellularLocation>
        <location evidence="3">Periplasm</location>
    </subcellularLocation>
</comment>
<comment type="induction">
    <text evidence="2">Induced by RclR in response to hypochlorous acid (HOCl).</text>
</comment>
<comment type="disruption phenotype">
    <text evidence="2">Mutants are more sensitive to HOCl treatment than wild-type cells.</text>
</comment>
<comment type="similarity">
    <text evidence="3">Belongs to the BhsA/McbA family.</text>
</comment>
<comment type="sequence caution" evidence="3">
    <conflict type="erroneous initiation">
        <sequence resource="EMBL-CDS" id="AAB18030"/>
    </conflict>
    <text>Extended N-terminus.</text>
</comment>
<proteinExistence type="evidence at transcript level"/>
<accession>P75687</accession>
<accession>P71304</accession>
<accession>Q2MCB9</accession>
<sequence length="78" mass="8472">MFKKSVLFATLLSGVMAFSTNADDKIILKHISVSSVSASPTVLEDTIADIARKYNASSWKVTSMRIDNNSTATAVLYK</sequence>
<dbReference type="EMBL" id="U73857">
    <property type="protein sequence ID" value="AAB18030.1"/>
    <property type="status" value="ALT_INIT"/>
    <property type="molecule type" value="Genomic_DNA"/>
</dbReference>
<dbReference type="EMBL" id="U00096">
    <property type="protein sequence ID" value="AAC73406.2"/>
    <property type="molecule type" value="Genomic_DNA"/>
</dbReference>
<dbReference type="EMBL" id="AP009048">
    <property type="protein sequence ID" value="BAE76087.1"/>
    <property type="molecule type" value="Genomic_DNA"/>
</dbReference>
<dbReference type="PIR" id="G64756">
    <property type="entry name" value="G64756"/>
</dbReference>
<dbReference type="RefSeq" id="NP_414837.2">
    <property type="nucleotide sequence ID" value="NC_000913.3"/>
</dbReference>
<dbReference type="RefSeq" id="WP_000474084.1">
    <property type="nucleotide sequence ID" value="NZ_SSZK01000048.1"/>
</dbReference>
<dbReference type="SMR" id="P75687"/>
<dbReference type="BioGRID" id="4259799">
    <property type="interactions" value="14"/>
</dbReference>
<dbReference type="FunCoup" id="P75687">
    <property type="interactions" value="72"/>
</dbReference>
<dbReference type="STRING" id="511145.b0303"/>
<dbReference type="PaxDb" id="511145-b0303"/>
<dbReference type="EnsemblBacteria" id="AAC73406">
    <property type="protein sequence ID" value="AAC73406"/>
    <property type="gene ID" value="b0303"/>
</dbReference>
<dbReference type="GeneID" id="945658"/>
<dbReference type="KEGG" id="ecj:JW5039"/>
<dbReference type="KEGG" id="eco:b0303"/>
<dbReference type="KEGG" id="ecoc:C3026_01485"/>
<dbReference type="KEGG" id="ecoc:C3026_24660"/>
<dbReference type="PATRIC" id="fig|511145.12.peg.310"/>
<dbReference type="EchoBASE" id="EB4026"/>
<dbReference type="eggNOG" id="ENOG50338ZN">
    <property type="taxonomic scope" value="Bacteria"/>
</dbReference>
<dbReference type="HOGENOM" id="CLU_2616581_0_0_6"/>
<dbReference type="InParanoid" id="P75687"/>
<dbReference type="OMA" id="FYMFKKP"/>
<dbReference type="OrthoDB" id="6572357at2"/>
<dbReference type="PhylomeDB" id="P75687"/>
<dbReference type="BioCyc" id="EcoCyc:G6173-MONOMER"/>
<dbReference type="PRO" id="PR:P75687"/>
<dbReference type="Proteomes" id="UP000000625">
    <property type="component" value="Chromosome"/>
</dbReference>
<dbReference type="GO" id="GO:0042597">
    <property type="term" value="C:periplasmic space"/>
    <property type="evidence" value="ECO:0007669"/>
    <property type="project" value="UniProtKB-SubCell"/>
</dbReference>
<dbReference type="GO" id="GO:1901530">
    <property type="term" value="P:response to hypochlorite"/>
    <property type="evidence" value="ECO:0000315"/>
    <property type="project" value="EcoCyc"/>
</dbReference>
<dbReference type="GO" id="GO:0006950">
    <property type="term" value="P:response to stress"/>
    <property type="evidence" value="ECO:0000318"/>
    <property type="project" value="GO_Central"/>
</dbReference>
<dbReference type="FunFam" id="3.30.1660.10:FF:000003">
    <property type="entry name" value="DUF1471 domain-containing protein"/>
    <property type="match status" value="1"/>
</dbReference>
<dbReference type="Gene3D" id="3.30.1660.10">
    <property type="entry name" value="Flavin-binding protein dodecin"/>
    <property type="match status" value="1"/>
</dbReference>
<dbReference type="InterPro" id="IPR025543">
    <property type="entry name" value="Dodecin-like"/>
</dbReference>
<dbReference type="InterPro" id="IPR047841">
    <property type="entry name" value="RclB-like"/>
</dbReference>
<dbReference type="InterPro" id="IPR036275">
    <property type="entry name" value="YdgH-like_sf"/>
</dbReference>
<dbReference type="InterPro" id="IPR010854">
    <property type="entry name" value="YdgH/BhsA/McbA-like_dom"/>
</dbReference>
<dbReference type="NCBIfam" id="NF040474">
    <property type="entry name" value="peri_RclB"/>
    <property type="match status" value="1"/>
</dbReference>
<dbReference type="Pfam" id="PF07338">
    <property type="entry name" value="YdgH_BhsA-like"/>
    <property type="match status" value="1"/>
</dbReference>
<dbReference type="SUPFAM" id="SSF159871">
    <property type="entry name" value="YdgH-like"/>
    <property type="match status" value="1"/>
</dbReference>
<reference key="1">
    <citation type="submission" date="1997-01" db="EMBL/GenBank/DDBJ databases">
        <title>Sequence of minutes 4-25 of Escherichia coli.</title>
        <authorList>
            <person name="Chung E."/>
            <person name="Allen E."/>
            <person name="Araujo R."/>
            <person name="Aparicio A.M."/>
            <person name="Davis K."/>
            <person name="Duncan M."/>
            <person name="Federspiel N."/>
            <person name="Hyman R."/>
            <person name="Kalman S."/>
            <person name="Komp C."/>
            <person name="Kurdi O."/>
            <person name="Lew H."/>
            <person name="Lin D."/>
            <person name="Namath A."/>
            <person name="Oefner P."/>
            <person name="Roberts D."/>
            <person name="Schramm S."/>
            <person name="Davis R.W."/>
        </authorList>
    </citation>
    <scope>NUCLEOTIDE SEQUENCE [LARGE SCALE GENOMIC DNA]</scope>
    <source>
        <strain>K12 / MG1655 / ATCC 47076</strain>
    </source>
</reference>
<reference key="2">
    <citation type="journal article" date="1997" name="Science">
        <title>The complete genome sequence of Escherichia coli K-12.</title>
        <authorList>
            <person name="Blattner F.R."/>
            <person name="Plunkett G. III"/>
            <person name="Bloch C.A."/>
            <person name="Perna N.T."/>
            <person name="Burland V."/>
            <person name="Riley M."/>
            <person name="Collado-Vides J."/>
            <person name="Glasner J.D."/>
            <person name="Rode C.K."/>
            <person name="Mayhew G.F."/>
            <person name="Gregor J."/>
            <person name="Davis N.W."/>
            <person name="Kirkpatrick H.A."/>
            <person name="Goeden M.A."/>
            <person name="Rose D.J."/>
            <person name="Mau B."/>
            <person name="Shao Y."/>
        </authorList>
    </citation>
    <scope>NUCLEOTIDE SEQUENCE [LARGE SCALE GENOMIC DNA]</scope>
    <source>
        <strain>K12 / MG1655 / ATCC 47076</strain>
    </source>
</reference>
<reference key="3">
    <citation type="journal article" date="2006" name="Mol. Syst. Biol.">
        <title>Highly accurate genome sequences of Escherichia coli K-12 strains MG1655 and W3110.</title>
        <authorList>
            <person name="Hayashi K."/>
            <person name="Morooka N."/>
            <person name="Yamamoto Y."/>
            <person name="Fujita K."/>
            <person name="Isono K."/>
            <person name="Choi S."/>
            <person name="Ohtsubo E."/>
            <person name="Baba T."/>
            <person name="Wanner B.L."/>
            <person name="Mori H."/>
            <person name="Horiuchi T."/>
        </authorList>
    </citation>
    <scope>NUCLEOTIDE SEQUENCE [LARGE SCALE GENOMIC DNA]</scope>
    <source>
        <strain>K12 / W3110 / ATCC 27325 / DSM 5911</strain>
    </source>
</reference>
<reference key="4">
    <citation type="journal article" date="2013" name="J. Biol. Chem.">
        <title>The RclR protein is a reactive chlorine-specific transcription factor in Escherichia coli.</title>
        <authorList>
            <person name="Parker B.W."/>
            <person name="Schwessinger E.A."/>
            <person name="Jakob U."/>
            <person name="Gray M.J."/>
        </authorList>
    </citation>
    <scope>FUNCTION</scope>
    <scope>INDUCTION</scope>
    <scope>DISRUPTION PHENOTYPE</scope>
    <scope>GENE NAME</scope>
    <source>
        <strain>K12 / MG1655 / ATCC 47076</strain>
    </source>
</reference>
<organism>
    <name type="scientific">Escherichia coli (strain K12)</name>
    <dbReference type="NCBI Taxonomy" id="83333"/>
    <lineage>
        <taxon>Bacteria</taxon>
        <taxon>Pseudomonadati</taxon>
        <taxon>Pseudomonadota</taxon>
        <taxon>Gammaproteobacteria</taxon>
        <taxon>Enterobacterales</taxon>
        <taxon>Enterobacteriaceae</taxon>
        <taxon>Escherichia</taxon>
    </lineage>
</organism>
<evidence type="ECO:0000255" key="1"/>
<evidence type="ECO:0000269" key="2">
    <source>
    </source>
</evidence>
<evidence type="ECO:0000305" key="3"/>
<name>RCLB_ECOLI</name>
<keyword id="KW-0574">Periplasm</keyword>
<keyword id="KW-1185">Reference proteome</keyword>
<keyword id="KW-0732">Signal</keyword>
<keyword id="KW-0346">Stress response</keyword>
<gene>
    <name type="primary">rclB</name>
    <name type="synonym">ykgI</name>
    <name type="ordered locus">b0303</name>
    <name type="ordered locus">JW5039</name>
</gene>
<feature type="signal peptide" evidence="1">
    <location>
        <begin position="1"/>
        <end position="22"/>
    </location>
</feature>
<feature type="chain" id="PRO_0000013791" description="Uncharacterized protein RclB">
    <location>
        <begin position="23"/>
        <end position="78"/>
    </location>
</feature>
<protein>
    <recommendedName>
        <fullName>Uncharacterized protein RclB</fullName>
    </recommendedName>
    <alternativeName>
        <fullName>Reactive chlorine resistance protein B</fullName>
    </alternativeName>
</protein>